<feature type="chain" id="PRO_0000174120" description="Glutamate carboxypeptidase 2">
    <location>
        <begin position="1"/>
        <end position="752"/>
    </location>
</feature>
<feature type="topological domain" description="Cytoplasmic" evidence="4">
    <location>
        <begin position="1"/>
        <end position="19"/>
    </location>
</feature>
<feature type="transmembrane region" description="Helical; Signal-anchor for type II membrane protein" evidence="4">
    <location>
        <begin position="20"/>
        <end position="44"/>
    </location>
</feature>
<feature type="topological domain" description="Extracellular" evidence="4">
    <location>
        <begin position="45"/>
        <end position="752"/>
    </location>
</feature>
<feature type="region of interest" description="NAALADase">
    <location>
        <begin position="276"/>
        <end position="589"/>
    </location>
</feature>
<feature type="active site" description="Nucleophile; for NAALADase activity" evidence="1">
    <location>
        <position position="426"/>
    </location>
</feature>
<feature type="active site" description="Charge relay system" evidence="4">
    <location>
        <position position="630"/>
    </location>
</feature>
<feature type="active site" description="Charge relay system" evidence="4">
    <location>
        <position position="668"/>
    </location>
</feature>
<feature type="active site" description="Charge relay system" evidence="4">
    <location>
        <position position="691"/>
    </location>
</feature>
<feature type="binding site" evidence="3">
    <location>
        <position position="212"/>
    </location>
    <ligand>
        <name>substrate</name>
    </ligand>
</feature>
<feature type="binding site" evidence="3">
    <location>
        <position position="259"/>
    </location>
    <ligand>
        <name>substrate</name>
    </ligand>
</feature>
<feature type="binding site" evidence="2">
    <location>
        <position position="271"/>
    </location>
    <ligand>
        <name>Ca(2+)</name>
        <dbReference type="ChEBI" id="CHEBI:29108"/>
    </ligand>
</feature>
<feature type="binding site" evidence="2">
    <location>
        <position position="274"/>
    </location>
    <ligand>
        <name>Ca(2+)</name>
        <dbReference type="ChEBI" id="CHEBI:29108"/>
    </ligand>
</feature>
<feature type="binding site" evidence="3">
    <location>
        <position position="379"/>
    </location>
    <ligand>
        <name>Zn(2+)</name>
        <dbReference type="ChEBI" id="CHEBI:29105"/>
        <label>1</label>
        <note>catalytic</note>
    </ligand>
</feature>
<feature type="binding site" evidence="3">
    <location>
        <position position="389"/>
    </location>
    <ligand>
        <name>Zn(2+)</name>
        <dbReference type="ChEBI" id="CHEBI:29105"/>
        <label>1</label>
        <note>catalytic</note>
    </ligand>
</feature>
<feature type="binding site" evidence="2">
    <location>
        <position position="389"/>
    </location>
    <ligand>
        <name>Zn(2+)</name>
        <dbReference type="ChEBI" id="CHEBI:29105"/>
        <label>2</label>
    </ligand>
</feature>
<feature type="binding site" evidence="3">
    <location>
        <position position="426"/>
    </location>
    <ligand>
        <name>substrate</name>
    </ligand>
</feature>
<feature type="binding site" evidence="2">
    <location>
        <position position="427"/>
    </location>
    <ligand>
        <name>Zn(2+)</name>
        <dbReference type="ChEBI" id="CHEBI:29105"/>
        <label>2</label>
    </ligand>
</feature>
<feature type="binding site" evidence="2">
    <location>
        <position position="435"/>
    </location>
    <ligand>
        <name>Ca(2+)</name>
        <dbReference type="ChEBI" id="CHEBI:29108"/>
    </ligand>
</feature>
<feature type="binding site" evidence="2">
    <location>
        <position position="438"/>
    </location>
    <ligand>
        <name>Ca(2+)</name>
        <dbReference type="ChEBI" id="CHEBI:29108"/>
    </ligand>
</feature>
<feature type="binding site" evidence="3">
    <location>
        <position position="455"/>
    </location>
    <ligand>
        <name>Zn(2+)</name>
        <dbReference type="ChEBI" id="CHEBI:29105"/>
        <label>1</label>
        <note>catalytic</note>
    </ligand>
</feature>
<feature type="binding site" evidence="3">
    <location>
        <begin position="519"/>
        <end position="520"/>
    </location>
    <ligand>
        <name>substrate</name>
    </ligand>
</feature>
<feature type="binding site" evidence="2">
    <location>
        <position position="521"/>
    </location>
    <ligand>
        <name>substrate</name>
    </ligand>
</feature>
<feature type="binding site" evidence="2">
    <location>
        <begin position="536"/>
        <end position="538"/>
    </location>
    <ligand>
        <name>substrate</name>
    </ligand>
</feature>
<feature type="binding site" evidence="3">
    <location>
        <begin position="554"/>
        <end position="555"/>
    </location>
    <ligand>
        <name>substrate</name>
    </ligand>
</feature>
<feature type="binding site" evidence="2">
    <location>
        <position position="554"/>
    </location>
    <ligand>
        <name>substrate</name>
    </ligand>
</feature>
<feature type="binding site" evidence="2">
    <location>
        <position position="555"/>
    </location>
    <ligand>
        <name>Zn(2+)</name>
        <dbReference type="ChEBI" id="CHEBI:29105"/>
        <label>2</label>
    </ligand>
</feature>
<feature type="binding site" evidence="3">
    <location>
        <begin position="701"/>
        <end position="702"/>
    </location>
    <ligand>
        <name>substrate</name>
    </ligand>
</feature>
<feature type="modified residue" description="Phosphoserine" evidence="6">
    <location>
        <position position="10"/>
    </location>
</feature>
<feature type="glycosylation site" description="N-linked (GlcNAc...) asparagine" evidence="4">
    <location>
        <position position="48"/>
    </location>
</feature>
<feature type="glycosylation site" description="N-linked (GlcNAc...) asparagine" evidence="2">
    <location>
        <position position="78"/>
    </location>
</feature>
<feature type="glycosylation site" description="N-linked (GlcNAc...) asparagine" evidence="2">
    <location>
        <position position="123"/>
    </location>
</feature>
<feature type="glycosylation site" description="N-linked (GlcNAc...) asparagine" evidence="2">
    <location>
        <position position="155"/>
    </location>
</feature>
<feature type="glycosylation site" description="N-linked (GlcNAc...) asparagine" evidence="2">
    <location>
        <position position="197"/>
    </location>
</feature>
<feature type="glycosylation site" description="N-linked (GlcNAc...) asparagine" evidence="2">
    <location>
        <position position="338"/>
    </location>
</feature>
<feature type="glycosylation site" description="N-linked (GlcNAc...) asparagine" evidence="2">
    <location>
        <position position="461"/>
    </location>
</feature>
<feature type="glycosylation site" description="N-linked (GlcNAc...) asparagine" evidence="7">
    <location>
        <position position="478"/>
    </location>
</feature>
<feature type="glycosylation site" description="N-linked (GlcNAc...) asparagine" evidence="7">
    <location>
        <position position="615"/>
    </location>
</feature>
<feature type="glycosylation site" description="N-linked (GlcNAc...) asparagine" evidence="2">
    <location>
        <position position="640"/>
    </location>
</feature>
<protein>
    <recommendedName>
        <fullName>Glutamate carboxypeptidase 2</fullName>
        <ecNumber>3.4.17.21</ecNumber>
    </recommendedName>
    <alternativeName>
        <fullName>Folate hydrolase 1</fullName>
    </alternativeName>
    <alternativeName>
        <fullName>Folylpoly-gamma-glutamate carboxypeptidase</fullName>
        <shortName>FGCP</shortName>
    </alternativeName>
    <alternativeName>
        <fullName>Glutamate carboxypeptidase II</fullName>
        <shortName>GCPII</shortName>
    </alternativeName>
    <alternativeName>
        <fullName>Membrane glutamate carboxypeptidase</fullName>
        <shortName>mGCP</shortName>
    </alternativeName>
    <alternativeName>
        <fullName>N-acetylated-alpha-linked acidic dipeptidase I</fullName>
        <shortName>NAALADase I</shortName>
    </alternativeName>
    <alternativeName>
        <fullName>Prostate-specific membrane antigen homolog</fullName>
    </alternativeName>
    <alternativeName>
        <fullName>Pteroylpoly-gamma-glutamate carboxypeptidase</fullName>
    </alternativeName>
</protein>
<accession>P70627</accession>
<accession>Q547B6</accession>
<comment type="function">
    <text evidence="1">Has both folate hydrolase and N-acetylated-alpha-linked-acidic dipeptidase (NAALADase) activity. Has a preference for tri-alpha-glutamate peptides (By similarity). In the intestine, required for the uptake of folate. In the brain, modulates excitatory neurotransmission through the hydrolysis of the neuropeptide, N-aceylaspartylglutamate (NAAG), thereby releasing glutamate.</text>
</comment>
<comment type="function">
    <text evidence="1">Also exhibits a dipeptidyl-peptidase IV type activity. In vitro, cleaves Gly-Pro-AMC.</text>
</comment>
<comment type="catalytic activity">
    <reaction>
        <text>Release of an unsubstituted, C-terminal glutamyl residue, typically from Ac-Asp-Glu or folylpoly-gamma-glutamates.</text>
        <dbReference type="EC" id="3.4.17.21"/>
    </reaction>
</comment>
<comment type="cofactor">
    <cofactor>
        <name>Zn(2+)</name>
        <dbReference type="ChEBI" id="CHEBI:29105"/>
    </cofactor>
    <text>Binds 2 Zn(2+) ions per subunit. Required for NAALADase activity.</text>
</comment>
<comment type="activity regulation">
    <text>The NAALADase activity is inhibited by beta-NAAG, quisqualic acid and 2-(phosphonomethyl)glutaric acid (PMG).</text>
</comment>
<comment type="subunit">
    <text evidence="1">Homodimer.</text>
</comment>
<comment type="subcellular location">
    <subcellularLocation>
        <location evidence="2">Cell membrane</location>
        <topology evidence="2">Single-pass type II membrane protein</topology>
    </subcellularLocation>
</comment>
<comment type="alternative products">
    <event type="alternative splicing"/>
    <isoform>
        <id>P70627-1</id>
        <name>1</name>
        <sequence type="displayed"/>
    </isoform>
    <isoform>
        <id>P70627-2</id>
        <name>2</name>
        <name>Short form</name>
        <sequence type="not described"/>
    </isoform>
    <isoform>
        <id>P70627-3</id>
        <name>3</name>
        <name>Long form</name>
        <sequence type="not described"/>
    </isoform>
    <text>Experimental confirmation may be lacking for some isoforms.</text>
</comment>
<comment type="tissue specificity">
    <text>Widely expressed throughout brain regions with highest levels in the hippocampus, dentate gyrus, priform cortex, choroid plexus of ventricles, pineal gland, anterior lobe of the pituitary gland and supraoptic nucleus. High levels also found in the cerebral cortex, substantia nigra, pontine nucleus and the granule cell layer of cerebellum. Highly expressed in astrocytes and non-myelinating Schwann cells. Also expressed in kidney, localizing to the proximal brush border of the renal tube.</text>
</comment>
<comment type="domain">
    <text>The NAALADase activity is found in the central region, the dipeptidyl peptidase IV type activity in the C-terminal.</text>
</comment>
<comment type="miscellaneous">
    <molecule>Isoform 2</molecule>
    <text evidence="5">Probably inactive.</text>
</comment>
<comment type="similarity">
    <text evidence="5">Belongs to the peptidase M28 family. M28B subfamily.</text>
</comment>
<keyword id="KW-0025">Alternative splicing</keyword>
<keyword id="KW-0106">Calcium</keyword>
<keyword id="KW-0121">Carboxypeptidase</keyword>
<keyword id="KW-1003">Cell membrane</keyword>
<keyword id="KW-0224">Dipeptidase</keyword>
<keyword id="KW-0325">Glycoprotein</keyword>
<keyword id="KW-0378">Hydrolase</keyword>
<keyword id="KW-0472">Membrane</keyword>
<keyword id="KW-0479">Metal-binding</keyword>
<keyword id="KW-0482">Metalloprotease</keyword>
<keyword id="KW-0511">Multifunctional enzyme</keyword>
<keyword id="KW-0597">Phosphoprotein</keyword>
<keyword id="KW-0645">Protease</keyword>
<keyword id="KW-1185">Reference proteome</keyword>
<keyword id="KW-0735">Signal-anchor</keyword>
<keyword id="KW-0812">Transmembrane</keyword>
<keyword id="KW-1133">Transmembrane helix</keyword>
<keyword id="KW-0862">Zinc</keyword>
<proteinExistence type="evidence at protein level"/>
<sequence length="752" mass="84540">MWNAQQDSDSAEALGRRQRWFCAGTLVLAFTGTFIIGFLFGWFIKPSNDSTSSVSYPGMKKAFLQELKAENIKKFLYNFTRTPHLAGTQHNFELAKQIHAQWKEFGLDLVELSDYDVLLSYPNKTHPNYISIINEDGNEIFKTSLAELSPPGYENISDVVPPYSAFSPQGTPEGDLVYVNYARTEDFFKLERVMKINCSGKIVIARYGQVFRGNKVKNAQLAGAKGIILYSDPADYFVPGVKSYPDGWNLPGGGVQRGNVLNLNGAGDPLTPGYPANEYAYRHEFTEAVGLPSIPVHPIGYDDAQKLLEHMGGSAPPDSSWKGGLKVPYNVGPGFAGNFSKQKVKLHIHSYNKVTRIYNVIGTLKGAVEPDRYVILGGHRDAWVFGGIDPQSGAAVVHEIVRTFGTLKKKGWRPRRTILFASWDAEEFGLLGSTEWAEEHSRLLQERGVAYINADSSIEGNYTLRVDCTPLMHSLVYNLTKELPSPDEGFEGKSLYDSWKEKSPSTEFIGMPRISKLGSGNDFEVFFQRLGIASGRARYTKNWKNNKVSSYPLYHSVYETYELVEKFYDPTFKYHLTVAQVRGAMVFELANSIVLPFDCQSYAVALKKHAETIYNISMNHPQEMKAYMISFDSLFSAVNNFTDVASKFNQRLQDLDKSNPILLRILNDQLMYLERAFIDPLGLPGRPFYRHIIYAPSSHNKYAGESFPGIYDALFDINNKVDTSKAWREVKRQISIAAFTVQAAAETLREVD</sequence>
<dbReference type="EC" id="3.4.17.21"/>
<dbReference type="EMBL" id="U75973">
    <property type="protein sequence ID" value="AAC53423.1"/>
    <property type="molecule type" value="mRNA"/>
</dbReference>
<dbReference type="EMBL" id="AF040256">
    <property type="protein sequence ID" value="AAC40067.1"/>
    <property type="molecule type" value="mRNA"/>
</dbReference>
<dbReference type="EMBL" id="AF513486">
    <property type="protein sequence ID" value="AAM47015.1"/>
    <property type="molecule type" value="mRNA"/>
</dbReference>
<dbReference type="EMBL" id="AF039707">
    <property type="protein sequence ID" value="AAB96759.1"/>
    <property type="molecule type" value="mRNA"/>
</dbReference>
<dbReference type="RefSeq" id="NP_476533.1">
    <property type="nucleotide sequence ID" value="NM_057185.2"/>
</dbReference>
<dbReference type="SMR" id="P70627"/>
<dbReference type="FunCoup" id="P70627">
    <property type="interactions" value="54"/>
</dbReference>
<dbReference type="STRING" id="10116.ENSRNOP00000018592"/>
<dbReference type="BindingDB" id="P70627"/>
<dbReference type="ChEMBL" id="CHEMBL5098"/>
<dbReference type="MEROPS" id="M28.010"/>
<dbReference type="GlyCosmos" id="P70627">
    <property type="glycosylation" value="10 sites, 14 glycans"/>
</dbReference>
<dbReference type="GlyGen" id="P70627">
    <property type="glycosylation" value="10 sites, 14 N-linked glycans (3 sites)"/>
</dbReference>
<dbReference type="iPTMnet" id="P70627"/>
<dbReference type="PhosphoSitePlus" id="P70627"/>
<dbReference type="PaxDb" id="10116-ENSRNOP00000018592"/>
<dbReference type="GeneID" id="85309"/>
<dbReference type="KEGG" id="rno:85309"/>
<dbReference type="UCSC" id="RGD:70963">
    <molecule id="P70627-1"/>
    <property type="organism name" value="rat"/>
</dbReference>
<dbReference type="AGR" id="RGD:70963"/>
<dbReference type="CTD" id="2346"/>
<dbReference type="RGD" id="70963">
    <property type="gene designation" value="Folh1"/>
</dbReference>
<dbReference type="eggNOG" id="KOG2195">
    <property type="taxonomic scope" value="Eukaryota"/>
</dbReference>
<dbReference type="InParanoid" id="P70627"/>
<dbReference type="OrthoDB" id="5841748at2759"/>
<dbReference type="PhylomeDB" id="P70627"/>
<dbReference type="BRENDA" id="3.4.17.21">
    <property type="organism ID" value="5301"/>
</dbReference>
<dbReference type="Reactome" id="R-RNO-8963693">
    <property type="pathway name" value="Aspartate and asparagine metabolism"/>
</dbReference>
<dbReference type="PRO" id="PR:P70627"/>
<dbReference type="Proteomes" id="UP000002494">
    <property type="component" value="Unplaced"/>
</dbReference>
<dbReference type="GO" id="GO:0009986">
    <property type="term" value="C:cell surface"/>
    <property type="evidence" value="ECO:0000266"/>
    <property type="project" value="RGD"/>
</dbReference>
<dbReference type="GO" id="GO:0016020">
    <property type="term" value="C:membrane"/>
    <property type="evidence" value="ECO:0000266"/>
    <property type="project" value="RGD"/>
</dbReference>
<dbReference type="GO" id="GO:0005886">
    <property type="term" value="C:plasma membrane"/>
    <property type="evidence" value="ECO:0000266"/>
    <property type="project" value="RGD"/>
</dbReference>
<dbReference type="GO" id="GO:1904492">
    <property type="term" value="F:Ac-Asp-Glu binding"/>
    <property type="evidence" value="ECO:0000266"/>
    <property type="project" value="RGD"/>
</dbReference>
<dbReference type="GO" id="GO:0004180">
    <property type="term" value="F:carboxypeptidase activity"/>
    <property type="evidence" value="ECO:0000266"/>
    <property type="project" value="RGD"/>
</dbReference>
<dbReference type="GO" id="GO:0016805">
    <property type="term" value="F:dipeptidase activity"/>
    <property type="evidence" value="ECO:0000266"/>
    <property type="project" value="RGD"/>
</dbReference>
<dbReference type="GO" id="GO:0046872">
    <property type="term" value="F:metal ion binding"/>
    <property type="evidence" value="ECO:0007669"/>
    <property type="project" value="UniProtKB-KW"/>
</dbReference>
<dbReference type="GO" id="GO:0004181">
    <property type="term" value="F:metallocarboxypeptidase activity"/>
    <property type="evidence" value="ECO:0000266"/>
    <property type="project" value="RGD"/>
</dbReference>
<dbReference type="GO" id="GO:0008233">
    <property type="term" value="F:peptidase activity"/>
    <property type="evidence" value="ECO:0000266"/>
    <property type="project" value="RGD"/>
</dbReference>
<dbReference type="GO" id="GO:1904493">
    <property type="term" value="F:tetrahydrofolyl-poly(glutamate) polymer binding"/>
    <property type="evidence" value="ECO:0000266"/>
    <property type="project" value="RGD"/>
</dbReference>
<dbReference type="GO" id="GO:0006760">
    <property type="term" value="P:folic acid-containing compound metabolic process"/>
    <property type="evidence" value="ECO:0000266"/>
    <property type="project" value="RGD"/>
</dbReference>
<dbReference type="GO" id="GO:0043065">
    <property type="term" value="P:positive regulation of apoptotic process"/>
    <property type="evidence" value="ECO:0000315"/>
    <property type="project" value="RGD"/>
</dbReference>
<dbReference type="GO" id="GO:0030163">
    <property type="term" value="P:protein catabolic process"/>
    <property type="evidence" value="ECO:0000314"/>
    <property type="project" value="RGD"/>
</dbReference>
<dbReference type="GO" id="GO:0006508">
    <property type="term" value="P:proteolysis"/>
    <property type="evidence" value="ECO:0000266"/>
    <property type="project" value="RGD"/>
</dbReference>
<dbReference type="CDD" id="cd08022">
    <property type="entry name" value="M28_PSMA_like"/>
    <property type="match status" value="1"/>
</dbReference>
<dbReference type="CDD" id="cd02121">
    <property type="entry name" value="PA_GCPII_like"/>
    <property type="match status" value="1"/>
</dbReference>
<dbReference type="FunFam" id="1.20.930.40:FF:000001">
    <property type="entry name" value="N-acetylated-alpha-linked acidic dipeptidase 2"/>
    <property type="match status" value="1"/>
</dbReference>
<dbReference type="FunFam" id="3.40.630.10:FF:000009">
    <property type="entry name" value="N-acetylated-alpha-linked acidic dipeptidase 2"/>
    <property type="match status" value="1"/>
</dbReference>
<dbReference type="FunFam" id="3.50.30.30:FF:000002">
    <property type="entry name" value="N-acetylated-alpha-linked acidic dipeptidase 2"/>
    <property type="match status" value="1"/>
</dbReference>
<dbReference type="Gene3D" id="3.50.30.30">
    <property type="match status" value="1"/>
</dbReference>
<dbReference type="Gene3D" id="1.20.930.40">
    <property type="entry name" value="Transferrin receptor-like, dimerisation domain"/>
    <property type="match status" value="1"/>
</dbReference>
<dbReference type="Gene3D" id="3.40.630.10">
    <property type="entry name" value="Zn peptidases"/>
    <property type="match status" value="1"/>
</dbReference>
<dbReference type="InterPro" id="IPR046450">
    <property type="entry name" value="PA_dom_sf"/>
</dbReference>
<dbReference type="InterPro" id="IPR003137">
    <property type="entry name" value="PA_domain"/>
</dbReference>
<dbReference type="InterPro" id="IPR007484">
    <property type="entry name" value="Peptidase_M28"/>
</dbReference>
<dbReference type="InterPro" id="IPR039373">
    <property type="entry name" value="Peptidase_M28B"/>
</dbReference>
<dbReference type="InterPro" id="IPR007365">
    <property type="entry name" value="TFR-like_dimer_dom"/>
</dbReference>
<dbReference type="InterPro" id="IPR036757">
    <property type="entry name" value="TFR-like_dimer_dom_sf"/>
</dbReference>
<dbReference type="PANTHER" id="PTHR10404:SF36">
    <property type="entry name" value="GLUTAMATE CARBOXYPEPTIDASE 2"/>
    <property type="match status" value="1"/>
</dbReference>
<dbReference type="PANTHER" id="PTHR10404">
    <property type="entry name" value="N-ACETYLATED-ALPHA-LINKED ACIDIC DIPEPTIDASE"/>
    <property type="match status" value="1"/>
</dbReference>
<dbReference type="Pfam" id="PF02225">
    <property type="entry name" value="PA"/>
    <property type="match status" value="1"/>
</dbReference>
<dbReference type="Pfam" id="PF04389">
    <property type="entry name" value="Peptidase_M28"/>
    <property type="match status" value="1"/>
</dbReference>
<dbReference type="Pfam" id="PF04253">
    <property type="entry name" value="TFR_dimer"/>
    <property type="match status" value="1"/>
</dbReference>
<dbReference type="SUPFAM" id="SSF52025">
    <property type="entry name" value="PA domain"/>
    <property type="match status" value="1"/>
</dbReference>
<dbReference type="SUPFAM" id="SSF47672">
    <property type="entry name" value="Transferrin receptor-like dimerisation domain"/>
    <property type="match status" value="1"/>
</dbReference>
<dbReference type="SUPFAM" id="SSF53187">
    <property type="entry name" value="Zn-dependent exopeptidases"/>
    <property type="match status" value="1"/>
</dbReference>
<evidence type="ECO:0000250" key="1"/>
<evidence type="ECO:0000250" key="2">
    <source>
        <dbReference type="UniProtKB" id="Q04609"/>
    </source>
</evidence>
<evidence type="ECO:0000250" key="3">
    <source>
        <dbReference type="UniProtKB" id="Q9Y3Q0"/>
    </source>
</evidence>
<evidence type="ECO:0000255" key="4"/>
<evidence type="ECO:0000305" key="5"/>
<evidence type="ECO:0007744" key="6">
    <source>
    </source>
</evidence>
<evidence type="ECO:0007744" key="7">
    <source>
    </source>
</evidence>
<reference key="1">
    <citation type="journal article" date="1997" name="J. Neurochem.">
        <title>Molecular cloning of a peptidase against N-acetylaspartylglutamate from a rat hippocampal cDNA library.</title>
        <authorList>
            <person name="Bzdega T."/>
            <person name="Turi T."/>
            <person name="Wroblewska B."/>
            <person name="She D."/>
            <person name="Chung H.S."/>
            <person name="Kim H."/>
            <person name="Neale J.H."/>
        </authorList>
    </citation>
    <scope>NUCLEOTIDE SEQUENCE [MRNA]</scope>
    <source>
        <strain>Sprague-Dawley</strain>
        <tissue>Hippocampus</tissue>
    </source>
</reference>
<reference key="2">
    <citation type="journal article" date="1998" name="Proc. Natl. Acad. Sci. U.S.A.">
        <title>Isolation and expression of a rat brain cDNA encoding glutamate carboxypeptidase II.</title>
        <authorList>
            <person name="Luthi-Carter R."/>
            <person name="Berger U.V."/>
            <person name="Barczak A.K."/>
            <person name="Enna M."/>
            <person name="Coyle J.T."/>
        </authorList>
    </citation>
    <scope>NUCLEOTIDE SEQUENCE [MRNA]</scope>
    <source>
        <strain>Sprague-Dawley</strain>
        <tissue>Brain</tissue>
    </source>
</reference>
<reference key="3">
    <citation type="journal article" date="2004" name="Arch. Biochem. Biophys.">
        <title>N-Acetylated alpha-linked acidic dipeptidase expressed in rat adipocytes is localized in the insulin-responsive glucose transporter (GLUT4) intracellular compartments and involved in the insulin-stimulated GLUT4 recruitment.</title>
        <authorList>
            <person name="Park S.Y."/>
            <person name="Ha B.G."/>
            <person name="Choi G.H."/>
            <person name="Lee W."/>
        </authorList>
    </citation>
    <scope>NUCLEOTIDE SEQUENCE [MRNA]</scope>
    <source>
        <strain>Sprague-Dawley</strain>
        <tissue>Adipose tissue</tissue>
    </source>
</reference>
<reference key="4">
    <citation type="journal article" date="1996" name="Proc. Natl. Acad. Sci. U.S.A.">
        <title>Prostate-specific membrane antigen is a hydrolase with substrate and pharmacologic characteristics of a neuropeptidase.</title>
        <authorList>
            <person name="Carter R.E."/>
            <person name="Feldman A.R."/>
            <person name="Coyle J.T."/>
        </authorList>
    </citation>
    <scope>NUCLEOTIDE SEQUENCE [MRNA] OF 284-752</scope>
    <source>
        <tissue>Brain</tissue>
    </source>
</reference>
<reference key="5">
    <citation type="journal article" date="1998" name="Abstr. - Soc. Neurosci.">
        <title>Molecular cloning of alternatively spliced variants of the peptidase against N-acetylaspartylglutamate (NAAG) from human and rat nervous systems.</title>
        <authorList>
            <person name="Bzdega T."/>
            <person name="She D."/>
            <person name="Turi T."/>
            <person name="Wroblewska B."/>
            <person name="Neale J.H."/>
        </authorList>
    </citation>
    <scope>ALTERNATIVE SPLICING</scope>
</reference>
<reference key="6">
    <citation type="journal article" date="2012" name="Nat. Commun.">
        <title>Quantitative maps of protein phosphorylation sites across 14 different rat organs and tissues.</title>
        <authorList>
            <person name="Lundby A."/>
            <person name="Secher A."/>
            <person name="Lage K."/>
            <person name="Nordsborg N.B."/>
            <person name="Dmytriyev A."/>
            <person name="Lundby C."/>
            <person name="Olsen J.V."/>
        </authorList>
    </citation>
    <scope>PHOSPHORYLATION [LARGE SCALE ANALYSIS] AT SER-10</scope>
    <scope>IDENTIFICATION BY MASS SPECTROMETRY [LARGE SCALE ANALYSIS]</scope>
</reference>
<reference key="7">
    <citation type="journal article" date="2013" name="J. Proteome Res.">
        <title>Site-specific glycan-peptide analysis for determination of N-glycoproteome heterogeneity.</title>
        <authorList>
            <person name="Parker B.L."/>
            <person name="Thaysen-Andersen M."/>
            <person name="Solis N."/>
            <person name="Scott N.E."/>
            <person name="Larsen M.R."/>
            <person name="Graham M.E."/>
            <person name="Packer N.H."/>
            <person name="Cordwell S.J."/>
        </authorList>
    </citation>
    <scope>GLYCOSYLATION [LARGE SCALE ANALYSIS] AT ASN-478 AND ASN-615</scope>
    <scope>IDENTIFICATION BY MASS SPECTROMETRY [LARGE SCALE ANALYSIS]</scope>
    <source>
        <tissue>Brain</tissue>
    </source>
</reference>
<gene>
    <name type="primary">Folh1</name>
    <name type="synonym">Naalad1</name>
</gene>
<name>FOLH1_RAT</name>
<organism>
    <name type="scientific">Rattus norvegicus</name>
    <name type="common">Rat</name>
    <dbReference type="NCBI Taxonomy" id="10116"/>
    <lineage>
        <taxon>Eukaryota</taxon>
        <taxon>Metazoa</taxon>
        <taxon>Chordata</taxon>
        <taxon>Craniata</taxon>
        <taxon>Vertebrata</taxon>
        <taxon>Euteleostomi</taxon>
        <taxon>Mammalia</taxon>
        <taxon>Eutheria</taxon>
        <taxon>Euarchontoglires</taxon>
        <taxon>Glires</taxon>
        <taxon>Rodentia</taxon>
        <taxon>Myomorpha</taxon>
        <taxon>Muroidea</taxon>
        <taxon>Muridae</taxon>
        <taxon>Murinae</taxon>
        <taxon>Rattus</taxon>
    </lineage>
</organism>